<organism>
    <name type="scientific">Plasmodium vivax (strain Salvador I)</name>
    <dbReference type="NCBI Taxonomy" id="126793"/>
    <lineage>
        <taxon>Eukaryota</taxon>
        <taxon>Sar</taxon>
        <taxon>Alveolata</taxon>
        <taxon>Apicomplexa</taxon>
        <taxon>Aconoidasida</taxon>
        <taxon>Haemosporida</taxon>
        <taxon>Plasmodiidae</taxon>
        <taxon>Plasmodium</taxon>
        <taxon>Plasmodium (Plasmodium)</taxon>
    </lineage>
</organism>
<dbReference type="EC" id="2.1.1.228" evidence="1"/>
<dbReference type="EMBL" id="AAKM01000007">
    <property type="protein sequence ID" value="EDL44951.1"/>
    <property type="molecule type" value="Genomic_DNA"/>
</dbReference>
<dbReference type="RefSeq" id="XP_001614678.1">
    <property type="nucleotide sequence ID" value="XM_001614628.1"/>
</dbReference>
<dbReference type="SMR" id="A5K6L0"/>
<dbReference type="STRING" id="126793.A5K6L0"/>
<dbReference type="EnsemblProtists" id="EDL44951">
    <property type="protein sequence ID" value="EDL44951"/>
    <property type="gene ID" value="PVX_099140"/>
</dbReference>
<dbReference type="GeneID" id="5473969"/>
<dbReference type="KEGG" id="pvx:PVX_099140"/>
<dbReference type="InParanoid" id="A5K6L0"/>
<dbReference type="OMA" id="GYENMNT"/>
<dbReference type="Proteomes" id="UP000008333">
    <property type="component" value="Chromosome 7"/>
</dbReference>
<dbReference type="GO" id="GO:0005759">
    <property type="term" value="C:mitochondrial matrix"/>
    <property type="evidence" value="ECO:0007669"/>
    <property type="project" value="UniProtKB-SubCell"/>
</dbReference>
<dbReference type="GO" id="GO:0005634">
    <property type="term" value="C:nucleus"/>
    <property type="evidence" value="ECO:0007669"/>
    <property type="project" value="UniProtKB-SubCell"/>
</dbReference>
<dbReference type="GO" id="GO:0052906">
    <property type="term" value="F:tRNA (guanine(37)-N1)-methyltransferase activity"/>
    <property type="evidence" value="ECO:0007669"/>
    <property type="project" value="UniProtKB-UniRule"/>
</dbReference>
<dbReference type="GO" id="GO:0002939">
    <property type="term" value="P:tRNA N1-guanine methylation"/>
    <property type="evidence" value="ECO:0007669"/>
    <property type="project" value="TreeGrafter"/>
</dbReference>
<dbReference type="FunFam" id="3.30.300.110:FF:000001">
    <property type="entry name" value="tRNA (guanine(37)-N1)-methyltransferase"/>
    <property type="match status" value="1"/>
</dbReference>
<dbReference type="Gene3D" id="3.30.300.110">
    <property type="entry name" value="Met-10+ protein-like domains"/>
    <property type="match status" value="1"/>
</dbReference>
<dbReference type="Gene3D" id="3.40.50.150">
    <property type="entry name" value="Vaccinia Virus protein VP39"/>
    <property type="match status" value="2"/>
</dbReference>
<dbReference type="HAMAP" id="MF_03152">
    <property type="entry name" value="TRM5"/>
    <property type="match status" value="1"/>
</dbReference>
<dbReference type="InterPro" id="IPR030382">
    <property type="entry name" value="MeTrfase_TRM5/TYW2"/>
</dbReference>
<dbReference type="InterPro" id="IPR029063">
    <property type="entry name" value="SAM-dependent_MTases_sf"/>
</dbReference>
<dbReference type="InterPro" id="IPR056743">
    <property type="entry name" value="TRM5-TYW2-like_MTfase"/>
</dbReference>
<dbReference type="InterPro" id="IPR056744">
    <property type="entry name" value="TRM5/TYW2-like_N"/>
</dbReference>
<dbReference type="InterPro" id="IPR025792">
    <property type="entry name" value="tRNA_Gua_MeTrfase_euk"/>
</dbReference>
<dbReference type="PANTHER" id="PTHR23245:SF43">
    <property type="entry name" value="TRNA (GUANINE(37)-N1)-METHYLTRANSFERASE 2"/>
    <property type="match status" value="1"/>
</dbReference>
<dbReference type="PANTHER" id="PTHR23245">
    <property type="entry name" value="TRNA METHYLTRANSFERASE"/>
    <property type="match status" value="1"/>
</dbReference>
<dbReference type="Pfam" id="PF02475">
    <property type="entry name" value="TRM5-TYW2_MTfase"/>
    <property type="match status" value="1"/>
</dbReference>
<dbReference type="Pfam" id="PF25133">
    <property type="entry name" value="TYW2_N_2"/>
    <property type="match status" value="1"/>
</dbReference>
<dbReference type="SUPFAM" id="SSF53335">
    <property type="entry name" value="S-adenosyl-L-methionine-dependent methyltransferases"/>
    <property type="match status" value="1"/>
</dbReference>
<dbReference type="PROSITE" id="PS51684">
    <property type="entry name" value="SAM_MT_TRM5_TYW2"/>
    <property type="match status" value="1"/>
</dbReference>
<gene>
    <name type="ORF">PVX_099140</name>
</gene>
<feature type="chain" id="PRO_0000414145" description="tRNA (guanine(37)-N(1))-methyltransferase">
    <location>
        <begin position="1"/>
        <end position="693"/>
    </location>
</feature>
<feature type="region of interest" description="Disordered" evidence="2">
    <location>
        <begin position="497"/>
        <end position="572"/>
    </location>
</feature>
<feature type="compositionally biased region" description="Low complexity" evidence="2">
    <location>
        <begin position="500"/>
        <end position="512"/>
    </location>
</feature>
<feature type="binding site" evidence="1">
    <location>
        <position position="327"/>
    </location>
    <ligand>
        <name>S-adenosyl-L-methionine</name>
        <dbReference type="ChEBI" id="CHEBI:59789"/>
    </ligand>
</feature>
<feature type="binding site" evidence="1">
    <location>
        <begin position="365"/>
        <end position="366"/>
    </location>
    <ligand>
        <name>S-adenosyl-L-methionine</name>
        <dbReference type="ChEBI" id="CHEBI:59789"/>
    </ligand>
</feature>
<feature type="binding site" evidence="1">
    <location>
        <begin position="392"/>
        <end position="393"/>
    </location>
    <ligand>
        <name>S-adenosyl-L-methionine</name>
        <dbReference type="ChEBI" id="CHEBI:59789"/>
    </ligand>
</feature>
<feature type="binding site" evidence="1">
    <location>
        <position position="591"/>
    </location>
    <ligand>
        <name>S-adenosyl-L-methionine</name>
        <dbReference type="ChEBI" id="CHEBI:59789"/>
    </ligand>
</feature>
<name>TRM5_PLAVS</name>
<protein>
    <recommendedName>
        <fullName evidence="1">tRNA (guanine(37)-N(1))-methyltransferase</fullName>
        <ecNumber evidence="1">2.1.1.228</ecNumber>
    </recommendedName>
    <alternativeName>
        <fullName evidence="1">M1G-methyltransferase</fullName>
    </alternativeName>
    <alternativeName>
        <fullName evidence="1">tRNA [GM37] methyltransferase</fullName>
    </alternativeName>
    <alternativeName>
        <fullName evidence="1">tRNA methyltransferase 5 homolog</fullName>
    </alternativeName>
</protein>
<proteinExistence type="inferred from homology"/>
<evidence type="ECO:0000255" key="1">
    <source>
        <dbReference type="HAMAP-Rule" id="MF_03152"/>
    </source>
</evidence>
<evidence type="ECO:0000256" key="2">
    <source>
        <dbReference type="SAM" id="MobiDB-lite"/>
    </source>
</evidence>
<evidence type="ECO:0000305" key="3"/>
<accession>A5K6L0</accession>
<keyword id="KW-0963">Cytoplasm</keyword>
<keyword id="KW-0489">Methyltransferase</keyword>
<keyword id="KW-0496">Mitochondrion</keyword>
<keyword id="KW-0539">Nucleus</keyword>
<keyword id="KW-1185">Reference proteome</keyword>
<keyword id="KW-0949">S-adenosyl-L-methionine</keyword>
<keyword id="KW-0808">Transferase</keyword>
<keyword id="KW-0819">tRNA processing</keyword>
<sequence>MRNAVDIKTLADVKEKVKHEKRTHCLVLNKYRVNELLKNKDAKIWFLNIFRFPSVLKFREYQGCLVETGPYDGEVLRFIHSYVESLGGGEVSGQVSGQVNDQLSCQMTSHANDSQAGTPLADAPLADCRLIPLNARFNRALHELMQREGKGVLEGVDMRPEEGDERDVAAEGGGVEDVAQQGAAHQDAPPALEKLLRVIKAEGIQIRTIQLQFGYDNMNTSQVLRKVFPSESEVIHKYEMIGHIAHLNFCERFENHKKVIAEIILDKNKSIRTVINKKDSLKNVHRTFTIELLAGEENYLTMLRENDIKVKLNYELMYWNSKLKKERDRIYSLVENNSIVVDVFAGVGIFSLHLSKKNCLCFSNDINLHAYNFMNVNIKLNKRRSILTYNLDARAFVCMLLRLGIFSRDTSTLAMQLGEQNWRNVSLDFVNSAGRDVVDAGKGKKRAADCKVDCKEDCKEDCKEDCKEDCKEDCKEDCKEDCKEDCKEDCEVKDCKAGDSHQSNSHQSNPHESNPHESAPRDKKKKLAHGDANGPLGERPPGVAATHGGEEVPPEPTNNEAEQKAEDAPTNETHQVDINLGIYGDVHVLMNLPQTALDFLDVFRELLHMYSAGQKDPQGRCRRDQMRNVFIHCYFFSKPELFYEHAERNIRMQLGGIPREMKITEIRKVSPSKLMYVVEFNLKDVFSQGDQLG</sequence>
<comment type="function">
    <text evidence="1">Specifically methylates the N1 position of guanosine-37 in various cytoplasmic and mitochondrial tRNAs. Methylation is not dependent on the nature of the nucleoside 5' of the target nucleoside. This is the first step in the biosynthesis of wybutosine (yW), a modified base adjacent to the anticodon of tRNAs and required for accurate decoding.</text>
</comment>
<comment type="catalytic activity">
    <reaction evidence="1">
        <text>guanosine(37) in tRNA + S-adenosyl-L-methionine = N(1)-methylguanosine(37) in tRNA + S-adenosyl-L-homocysteine + H(+)</text>
        <dbReference type="Rhea" id="RHEA:36899"/>
        <dbReference type="Rhea" id="RHEA-COMP:10145"/>
        <dbReference type="Rhea" id="RHEA-COMP:10147"/>
        <dbReference type="ChEBI" id="CHEBI:15378"/>
        <dbReference type="ChEBI" id="CHEBI:57856"/>
        <dbReference type="ChEBI" id="CHEBI:59789"/>
        <dbReference type="ChEBI" id="CHEBI:73542"/>
        <dbReference type="ChEBI" id="CHEBI:74269"/>
        <dbReference type="EC" id="2.1.1.228"/>
    </reaction>
</comment>
<comment type="subunit">
    <text evidence="1">Monomer.</text>
</comment>
<comment type="subcellular location">
    <subcellularLocation>
        <location evidence="1">Mitochondrion matrix</location>
    </subcellularLocation>
    <subcellularLocation>
        <location evidence="1">Nucleus</location>
    </subcellularLocation>
    <subcellularLocation>
        <location evidence="1">Cytoplasm</location>
    </subcellularLocation>
    <text evidence="1">Predominantly in the mitochondria and in the nucleus.</text>
</comment>
<comment type="similarity">
    <text evidence="3">Belongs to the class I-like SAM-binding methyltransferase superfamily. TRM5/TYW2 family.</text>
</comment>
<reference key="1">
    <citation type="journal article" date="2008" name="Nature">
        <title>Comparative genomics of the neglected human malaria parasite Plasmodium vivax.</title>
        <authorList>
            <person name="Carlton J.M."/>
            <person name="Adams J.H."/>
            <person name="Silva J.C."/>
            <person name="Bidwell S.L."/>
            <person name="Lorenzi H."/>
            <person name="Caler E."/>
            <person name="Crabtree J."/>
            <person name="Angiuoli S.V."/>
            <person name="Merino E.F."/>
            <person name="Amedeo P."/>
            <person name="Cheng Q."/>
            <person name="Coulson R.M.R."/>
            <person name="Crabb B.S."/>
            <person name="del Portillo H.A."/>
            <person name="Essien K."/>
            <person name="Feldblyum T.V."/>
            <person name="Fernandez-Becerra C."/>
            <person name="Gilson P.R."/>
            <person name="Gueye A.H."/>
            <person name="Guo X."/>
            <person name="Kang'a S."/>
            <person name="Kooij T.W.A."/>
            <person name="Korsinczky M."/>
            <person name="Meyer E.V.-S."/>
            <person name="Nene V."/>
            <person name="Paulsen I."/>
            <person name="White O."/>
            <person name="Ralph S.A."/>
            <person name="Ren Q."/>
            <person name="Sargeant T.J."/>
            <person name="Salzberg S.L."/>
            <person name="Stoeckert C.J."/>
            <person name="Sullivan S.A."/>
            <person name="Yamamoto M.M."/>
            <person name="Hoffman S.L."/>
            <person name="Wortman J.R."/>
            <person name="Gardner M.J."/>
            <person name="Galinski M.R."/>
            <person name="Barnwell J.W."/>
            <person name="Fraser-Liggett C.M."/>
        </authorList>
    </citation>
    <scope>NUCLEOTIDE SEQUENCE [LARGE SCALE GENOMIC DNA]</scope>
    <source>
        <strain>Salvador I</strain>
    </source>
</reference>